<feature type="chain" id="PRO_0000205248" description="Isopentenyl-diphosphate Delta-isomerase">
    <location>
        <begin position="1"/>
        <end position="179"/>
    </location>
</feature>
<feature type="domain" description="Nudix hydrolase">
    <location>
        <begin position="29"/>
        <end position="161"/>
    </location>
</feature>
<feature type="active site" evidence="1">
    <location>
        <position position="66"/>
    </location>
</feature>
<feature type="active site" evidence="1">
    <location>
        <position position="113"/>
    </location>
</feature>
<feature type="binding site" evidence="1">
    <location>
        <position position="25"/>
    </location>
    <ligand>
        <name>Mn(2+)</name>
        <dbReference type="ChEBI" id="CHEBI:29035"/>
    </ligand>
</feature>
<feature type="binding site" evidence="1">
    <location>
        <position position="31"/>
    </location>
    <ligand>
        <name>Mn(2+)</name>
        <dbReference type="ChEBI" id="CHEBI:29035"/>
    </ligand>
</feature>
<feature type="binding site" evidence="1">
    <location>
        <position position="66"/>
    </location>
    <ligand>
        <name>Mg(2+)</name>
        <dbReference type="ChEBI" id="CHEBI:18420"/>
    </ligand>
</feature>
<feature type="binding site" evidence="1">
    <location>
        <position position="68"/>
    </location>
    <ligand>
        <name>Mn(2+)</name>
        <dbReference type="ChEBI" id="CHEBI:29035"/>
    </ligand>
</feature>
<feature type="binding site" evidence="1">
    <location>
        <position position="86"/>
    </location>
    <ligand>
        <name>Mg(2+)</name>
        <dbReference type="ChEBI" id="CHEBI:18420"/>
    </ligand>
</feature>
<feature type="binding site" evidence="1">
    <location>
        <position position="111"/>
    </location>
    <ligand>
        <name>Mn(2+)</name>
        <dbReference type="ChEBI" id="CHEBI:29035"/>
    </ligand>
</feature>
<feature type="binding site" evidence="1">
    <location>
        <position position="113"/>
    </location>
    <ligand>
        <name>Mn(2+)</name>
        <dbReference type="ChEBI" id="CHEBI:29035"/>
    </ligand>
</feature>
<gene>
    <name evidence="1" type="primary">idi</name>
    <name type="ordered locus">ECA2789</name>
</gene>
<protein>
    <recommendedName>
        <fullName evidence="1">Isopentenyl-diphosphate Delta-isomerase</fullName>
        <shortName evidence="1">IPP isomerase</shortName>
        <ecNumber evidence="1">5.3.3.2</ecNumber>
    </recommendedName>
    <alternativeName>
        <fullName evidence="1">IPP:DMAPP isomerase</fullName>
    </alternativeName>
    <alternativeName>
        <fullName evidence="1">Isopentenyl pyrophosphate isomerase</fullName>
    </alternativeName>
</protein>
<evidence type="ECO:0000255" key="1">
    <source>
        <dbReference type="HAMAP-Rule" id="MF_00202"/>
    </source>
</evidence>
<name>IDI_PECAS</name>
<comment type="function">
    <text evidence="1">Catalyzes the 1,3-allylic rearrangement of the homoallylic substrate isopentenyl (IPP) to its highly electrophilic allylic isomer, dimethylallyl diphosphate (DMAPP).</text>
</comment>
<comment type="catalytic activity">
    <reaction evidence="1">
        <text>isopentenyl diphosphate = dimethylallyl diphosphate</text>
        <dbReference type="Rhea" id="RHEA:23284"/>
        <dbReference type="ChEBI" id="CHEBI:57623"/>
        <dbReference type="ChEBI" id="CHEBI:128769"/>
        <dbReference type="EC" id="5.3.3.2"/>
    </reaction>
</comment>
<comment type="cofactor">
    <cofactor evidence="1">
        <name>Mg(2+)</name>
        <dbReference type="ChEBI" id="CHEBI:18420"/>
    </cofactor>
    <text evidence="1">Binds 1 Mg(2+) ion per subunit. The magnesium ion binds only when substrate is bound.</text>
</comment>
<comment type="cofactor">
    <cofactor evidence="1">
        <name>Mn(2+)</name>
        <dbReference type="ChEBI" id="CHEBI:29035"/>
    </cofactor>
    <text evidence="1">Binds 1 Mn(2+) ion per subunit.</text>
</comment>
<comment type="pathway">
    <text evidence="1">Isoprenoid biosynthesis; dimethylallyl diphosphate biosynthesis; dimethylallyl diphosphate from isopentenyl diphosphate: step 1/1.</text>
</comment>
<comment type="subunit">
    <text evidence="1">Homodimer.</text>
</comment>
<comment type="subcellular location">
    <subcellularLocation>
        <location evidence="1">Cytoplasm</location>
    </subcellularLocation>
</comment>
<comment type="similarity">
    <text evidence="1">Belongs to the IPP isomerase type 1 family.</text>
</comment>
<dbReference type="EC" id="5.3.3.2" evidence="1"/>
<dbReference type="EMBL" id="BX950851">
    <property type="protein sequence ID" value="CAG75689.1"/>
    <property type="molecule type" value="Genomic_DNA"/>
</dbReference>
<dbReference type="RefSeq" id="WP_011094324.1">
    <property type="nucleotide sequence ID" value="NC_004547.2"/>
</dbReference>
<dbReference type="SMR" id="Q6D3F5"/>
<dbReference type="STRING" id="218491.ECA2789"/>
<dbReference type="GeneID" id="57208520"/>
<dbReference type="KEGG" id="eca:ECA2789"/>
<dbReference type="PATRIC" id="fig|218491.5.peg.2827"/>
<dbReference type="eggNOG" id="COG1443">
    <property type="taxonomic scope" value="Bacteria"/>
</dbReference>
<dbReference type="HOGENOM" id="CLU_060552_2_1_6"/>
<dbReference type="OrthoDB" id="9809458at2"/>
<dbReference type="UniPathway" id="UPA00059">
    <property type="reaction ID" value="UER00104"/>
</dbReference>
<dbReference type="Proteomes" id="UP000007966">
    <property type="component" value="Chromosome"/>
</dbReference>
<dbReference type="GO" id="GO:0005737">
    <property type="term" value="C:cytoplasm"/>
    <property type="evidence" value="ECO:0007669"/>
    <property type="project" value="UniProtKB-SubCell"/>
</dbReference>
<dbReference type="GO" id="GO:0004452">
    <property type="term" value="F:isopentenyl-diphosphate delta-isomerase activity"/>
    <property type="evidence" value="ECO:0007669"/>
    <property type="project" value="UniProtKB-UniRule"/>
</dbReference>
<dbReference type="GO" id="GO:0046872">
    <property type="term" value="F:metal ion binding"/>
    <property type="evidence" value="ECO:0007669"/>
    <property type="project" value="UniProtKB-KW"/>
</dbReference>
<dbReference type="GO" id="GO:0050992">
    <property type="term" value="P:dimethylallyl diphosphate biosynthetic process"/>
    <property type="evidence" value="ECO:0007669"/>
    <property type="project" value="UniProtKB-UniRule"/>
</dbReference>
<dbReference type="GO" id="GO:0009240">
    <property type="term" value="P:isopentenyl diphosphate biosynthetic process"/>
    <property type="evidence" value="ECO:0007669"/>
    <property type="project" value="TreeGrafter"/>
</dbReference>
<dbReference type="CDD" id="cd02885">
    <property type="entry name" value="NUDIX_IPP_Isomerase"/>
    <property type="match status" value="1"/>
</dbReference>
<dbReference type="Gene3D" id="3.90.79.10">
    <property type="entry name" value="Nucleoside Triphosphate Pyrophosphohydrolase"/>
    <property type="match status" value="1"/>
</dbReference>
<dbReference type="HAMAP" id="MF_00202">
    <property type="entry name" value="Idi"/>
    <property type="match status" value="1"/>
</dbReference>
<dbReference type="InterPro" id="IPR056375">
    <property type="entry name" value="Idi_bact"/>
</dbReference>
<dbReference type="InterPro" id="IPR011876">
    <property type="entry name" value="IsopentenylPP_isomerase_typ1"/>
</dbReference>
<dbReference type="InterPro" id="IPR015797">
    <property type="entry name" value="NUDIX_hydrolase-like_dom_sf"/>
</dbReference>
<dbReference type="InterPro" id="IPR000086">
    <property type="entry name" value="NUDIX_hydrolase_dom"/>
</dbReference>
<dbReference type="NCBIfam" id="TIGR02150">
    <property type="entry name" value="IPP_isom_1"/>
    <property type="match status" value="1"/>
</dbReference>
<dbReference type="NCBIfam" id="NF002995">
    <property type="entry name" value="PRK03759.1"/>
    <property type="match status" value="1"/>
</dbReference>
<dbReference type="PANTHER" id="PTHR10885">
    <property type="entry name" value="ISOPENTENYL-DIPHOSPHATE DELTA-ISOMERASE"/>
    <property type="match status" value="1"/>
</dbReference>
<dbReference type="PANTHER" id="PTHR10885:SF0">
    <property type="entry name" value="ISOPENTENYL-DIPHOSPHATE DELTA-ISOMERASE"/>
    <property type="match status" value="1"/>
</dbReference>
<dbReference type="Pfam" id="PF00293">
    <property type="entry name" value="NUDIX"/>
    <property type="match status" value="1"/>
</dbReference>
<dbReference type="PIRSF" id="PIRSF018427">
    <property type="entry name" value="Isopntndiph_ism"/>
    <property type="match status" value="1"/>
</dbReference>
<dbReference type="SUPFAM" id="SSF55811">
    <property type="entry name" value="Nudix"/>
    <property type="match status" value="1"/>
</dbReference>
<dbReference type="PROSITE" id="PS51462">
    <property type="entry name" value="NUDIX"/>
    <property type="match status" value="1"/>
</dbReference>
<proteinExistence type="inferred from homology"/>
<sequence length="179" mass="20815">MPLTEVVLVDENDKPTGVMEKQEAHVKGELHRAITVYIFNSRQQLLLQQRAEEKYHSGGLWSNTCCSHPAPGEETLQAAHRRLYEEMGLRCALTPMFTLTYRLQLDNGLIEHELGHVYFGVTDDVPQINPDEVSSYEYQSIDEITQRMMMTPEQFTAWFQLTFARIPDYWQAFKSEQSR</sequence>
<accession>Q6D3F5</accession>
<organism>
    <name type="scientific">Pectobacterium atrosepticum (strain SCRI 1043 / ATCC BAA-672)</name>
    <name type="common">Erwinia carotovora subsp. atroseptica</name>
    <dbReference type="NCBI Taxonomy" id="218491"/>
    <lineage>
        <taxon>Bacteria</taxon>
        <taxon>Pseudomonadati</taxon>
        <taxon>Pseudomonadota</taxon>
        <taxon>Gammaproteobacteria</taxon>
        <taxon>Enterobacterales</taxon>
        <taxon>Pectobacteriaceae</taxon>
        <taxon>Pectobacterium</taxon>
    </lineage>
</organism>
<keyword id="KW-0963">Cytoplasm</keyword>
<keyword id="KW-0413">Isomerase</keyword>
<keyword id="KW-0414">Isoprene biosynthesis</keyword>
<keyword id="KW-0460">Magnesium</keyword>
<keyword id="KW-0464">Manganese</keyword>
<keyword id="KW-0479">Metal-binding</keyword>
<keyword id="KW-1185">Reference proteome</keyword>
<reference key="1">
    <citation type="journal article" date="2004" name="Proc. Natl. Acad. Sci. U.S.A.">
        <title>Genome sequence of the enterobacterial phytopathogen Erwinia carotovora subsp. atroseptica and characterization of virulence factors.</title>
        <authorList>
            <person name="Bell K.S."/>
            <person name="Sebaihia M."/>
            <person name="Pritchard L."/>
            <person name="Holden M.T.G."/>
            <person name="Hyman L.J."/>
            <person name="Holeva M.C."/>
            <person name="Thomson N.R."/>
            <person name="Bentley S.D."/>
            <person name="Churcher L.J.C."/>
            <person name="Mungall K."/>
            <person name="Atkin R."/>
            <person name="Bason N."/>
            <person name="Brooks K."/>
            <person name="Chillingworth T."/>
            <person name="Clark K."/>
            <person name="Doggett J."/>
            <person name="Fraser A."/>
            <person name="Hance Z."/>
            <person name="Hauser H."/>
            <person name="Jagels K."/>
            <person name="Moule S."/>
            <person name="Norbertczak H."/>
            <person name="Ormond D."/>
            <person name="Price C."/>
            <person name="Quail M.A."/>
            <person name="Sanders M."/>
            <person name="Walker D."/>
            <person name="Whitehead S."/>
            <person name="Salmond G.P.C."/>
            <person name="Birch P.R.J."/>
            <person name="Parkhill J."/>
            <person name="Toth I.K."/>
        </authorList>
    </citation>
    <scope>NUCLEOTIDE SEQUENCE [LARGE SCALE GENOMIC DNA]</scope>
    <source>
        <strain>SCRI 1043 / ATCC BAA-672</strain>
    </source>
</reference>